<gene>
    <name evidence="1" type="primary">arcA</name>
    <name type="ordered locus">SAB2510c</name>
</gene>
<proteinExistence type="inferred from homology"/>
<evidence type="ECO:0000255" key="1">
    <source>
        <dbReference type="HAMAP-Rule" id="MF_00242"/>
    </source>
</evidence>
<comment type="catalytic activity">
    <reaction evidence="1">
        <text>L-arginine + H2O = L-citrulline + NH4(+)</text>
        <dbReference type="Rhea" id="RHEA:19597"/>
        <dbReference type="ChEBI" id="CHEBI:15377"/>
        <dbReference type="ChEBI" id="CHEBI:28938"/>
        <dbReference type="ChEBI" id="CHEBI:32682"/>
        <dbReference type="ChEBI" id="CHEBI:57743"/>
        <dbReference type="EC" id="3.5.3.6"/>
    </reaction>
</comment>
<comment type="pathway">
    <text evidence="1">Amino-acid degradation; L-arginine degradation via ADI pathway; carbamoyl phosphate from L-arginine: step 1/2.</text>
</comment>
<comment type="subcellular location">
    <subcellularLocation>
        <location evidence="1">Cytoplasm</location>
    </subcellularLocation>
</comment>
<comment type="similarity">
    <text evidence="1">Belongs to the arginine deiminase family.</text>
</comment>
<feature type="chain" id="PRO_1000005722" description="Arginine deiminase">
    <location>
        <begin position="1"/>
        <end position="411"/>
    </location>
</feature>
<feature type="active site" description="Amidino-cysteine intermediate" evidence="1">
    <location>
        <position position="401"/>
    </location>
</feature>
<accession>Q2YZ66</accession>
<keyword id="KW-0056">Arginine metabolism</keyword>
<keyword id="KW-0963">Cytoplasm</keyword>
<keyword id="KW-0378">Hydrolase</keyword>
<organism>
    <name type="scientific">Staphylococcus aureus (strain bovine RF122 / ET3-1)</name>
    <dbReference type="NCBI Taxonomy" id="273036"/>
    <lineage>
        <taxon>Bacteria</taxon>
        <taxon>Bacillati</taxon>
        <taxon>Bacillota</taxon>
        <taxon>Bacilli</taxon>
        <taxon>Bacillales</taxon>
        <taxon>Staphylococcaceae</taxon>
        <taxon>Staphylococcus</taxon>
    </lineage>
</organism>
<dbReference type="EC" id="3.5.3.6" evidence="1"/>
<dbReference type="EMBL" id="AJ938182">
    <property type="protein sequence ID" value="CAI82198.1"/>
    <property type="molecule type" value="Genomic_DNA"/>
</dbReference>
<dbReference type="RefSeq" id="WP_000129411.1">
    <property type="nucleotide sequence ID" value="NC_007622.1"/>
</dbReference>
<dbReference type="SMR" id="Q2YZ66"/>
<dbReference type="KEGG" id="sab:SAB2510c"/>
<dbReference type="HOGENOM" id="CLU_052662_0_1_9"/>
<dbReference type="UniPathway" id="UPA00254">
    <property type="reaction ID" value="UER00364"/>
</dbReference>
<dbReference type="GO" id="GO:0005737">
    <property type="term" value="C:cytoplasm"/>
    <property type="evidence" value="ECO:0007669"/>
    <property type="project" value="UniProtKB-SubCell"/>
</dbReference>
<dbReference type="GO" id="GO:0016990">
    <property type="term" value="F:arginine deiminase activity"/>
    <property type="evidence" value="ECO:0007669"/>
    <property type="project" value="UniProtKB-UniRule"/>
</dbReference>
<dbReference type="GO" id="GO:0019547">
    <property type="term" value="P:arginine catabolic process to ornithine"/>
    <property type="evidence" value="ECO:0007669"/>
    <property type="project" value="UniProtKB-UniRule"/>
</dbReference>
<dbReference type="GO" id="GO:0019546">
    <property type="term" value="P:arginine deiminase pathway"/>
    <property type="evidence" value="ECO:0007669"/>
    <property type="project" value="TreeGrafter"/>
</dbReference>
<dbReference type="FunFam" id="1.10.3930.10:FF:000001">
    <property type="entry name" value="Arginine deiminase"/>
    <property type="match status" value="1"/>
</dbReference>
<dbReference type="Gene3D" id="1.10.3930.10">
    <property type="entry name" value="Arginine deiminase"/>
    <property type="match status" value="1"/>
</dbReference>
<dbReference type="Gene3D" id="3.75.10.10">
    <property type="entry name" value="L-arginine/glycine Amidinotransferase, Chain A"/>
    <property type="match status" value="1"/>
</dbReference>
<dbReference type="HAMAP" id="MF_00242">
    <property type="entry name" value="Arg_deiminase"/>
    <property type="match status" value="1"/>
</dbReference>
<dbReference type="InterPro" id="IPR003876">
    <property type="entry name" value="Arg_deiminase"/>
</dbReference>
<dbReference type="NCBIfam" id="TIGR01078">
    <property type="entry name" value="arcA"/>
    <property type="match status" value="1"/>
</dbReference>
<dbReference type="NCBIfam" id="NF002381">
    <property type="entry name" value="PRK01388.1"/>
    <property type="match status" value="1"/>
</dbReference>
<dbReference type="PANTHER" id="PTHR47271">
    <property type="entry name" value="ARGININE DEIMINASE"/>
    <property type="match status" value="1"/>
</dbReference>
<dbReference type="PANTHER" id="PTHR47271:SF2">
    <property type="entry name" value="ARGININE DEIMINASE"/>
    <property type="match status" value="1"/>
</dbReference>
<dbReference type="Pfam" id="PF02274">
    <property type="entry name" value="ADI"/>
    <property type="match status" value="1"/>
</dbReference>
<dbReference type="PIRSF" id="PIRSF006356">
    <property type="entry name" value="Arg_deiminase"/>
    <property type="match status" value="1"/>
</dbReference>
<dbReference type="PRINTS" id="PR01466">
    <property type="entry name" value="ARGDEIMINASE"/>
</dbReference>
<dbReference type="SUPFAM" id="SSF55909">
    <property type="entry name" value="Pentein"/>
    <property type="match status" value="1"/>
</dbReference>
<protein>
    <recommendedName>
        <fullName evidence="1">Arginine deiminase</fullName>
        <shortName evidence="1">ADI</shortName>
        <ecNumber evidence="1">3.5.3.6</ecNumber>
    </recommendedName>
    <alternativeName>
        <fullName evidence="1">Arginine dihydrolase</fullName>
        <shortName evidence="1">AD</shortName>
    </alternativeName>
</protein>
<name>ARCA_STAAB</name>
<reference key="1">
    <citation type="journal article" date="2007" name="PLoS ONE">
        <title>Molecular correlates of host specialization in Staphylococcus aureus.</title>
        <authorList>
            <person name="Herron-Olson L."/>
            <person name="Fitzgerald J.R."/>
            <person name="Musser J.M."/>
            <person name="Kapur V."/>
        </authorList>
    </citation>
    <scope>NUCLEOTIDE SEQUENCE [LARGE SCALE GENOMIC DNA]</scope>
    <source>
        <strain>bovine RF122 / ET3-1</strain>
    </source>
</reference>
<sequence length="411" mass="46915">MTDGPIKVNSEIGALKTVLLKRPGKELENLVPDYLDGLLFDDIPYLEVAQKEHDHFAQVLREEGVEVLYLEKLAAESIENPQVRSEFIDDVLAESKKTILGHEEEIKALFATLSNQELVDKIMSGVRKEEINPKCTHLVEYMDDKYPFYLDPMPNLYFTRDPQASIGHGITINRMFWRARRRESIFIQYIVKHHPRFKDANIPIWLDRDCPFNIEGGDELVLSKDVLAIGVSERTSAQAIEKLARRIFENPQATFKKVVAIEIPTSRTFMHLDTVFTMIDYDKFTMHSAILKAEGNMNIFIIEYDDVNKDIAIKQSSHLKDTLEDVLGIDDIQFIPTGNGDVIDGAREQWNDGSNTLCIRPGVVVTYDRNYVSNDLLRQKGIKVIEISGSELVRGRGGPRCMSQPLFREDI</sequence>